<accession>Q12NI4</accession>
<comment type="function">
    <text evidence="1">Binds directly to 23S ribosomal RNA and is necessary for the in vitro assembly process of the 50S ribosomal subunit. It is not involved in the protein synthesizing functions of that subunit.</text>
</comment>
<comment type="similarity">
    <text evidence="1">Belongs to the bacterial ribosomal protein bL20 family.</text>
</comment>
<evidence type="ECO:0000255" key="1">
    <source>
        <dbReference type="HAMAP-Rule" id="MF_00382"/>
    </source>
</evidence>
<evidence type="ECO:0000305" key="2"/>
<dbReference type="EMBL" id="CP000302">
    <property type="protein sequence ID" value="ABE54992.1"/>
    <property type="molecule type" value="Genomic_DNA"/>
</dbReference>
<dbReference type="RefSeq" id="WP_006081652.1">
    <property type="nucleotide sequence ID" value="NC_007954.1"/>
</dbReference>
<dbReference type="SMR" id="Q12NI4"/>
<dbReference type="STRING" id="318161.Sden_1708"/>
<dbReference type="GeneID" id="94727990"/>
<dbReference type="KEGG" id="sdn:Sden_1708"/>
<dbReference type="eggNOG" id="COG0292">
    <property type="taxonomic scope" value="Bacteria"/>
</dbReference>
<dbReference type="HOGENOM" id="CLU_123265_0_1_6"/>
<dbReference type="OrthoDB" id="9808966at2"/>
<dbReference type="Proteomes" id="UP000001982">
    <property type="component" value="Chromosome"/>
</dbReference>
<dbReference type="GO" id="GO:1990904">
    <property type="term" value="C:ribonucleoprotein complex"/>
    <property type="evidence" value="ECO:0007669"/>
    <property type="project" value="UniProtKB-KW"/>
</dbReference>
<dbReference type="GO" id="GO:0005840">
    <property type="term" value="C:ribosome"/>
    <property type="evidence" value="ECO:0007669"/>
    <property type="project" value="UniProtKB-KW"/>
</dbReference>
<dbReference type="GO" id="GO:0019843">
    <property type="term" value="F:rRNA binding"/>
    <property type="evidence" value="ECO:0007669"/>
    <property type="project" value="UniProtKB-UniRule"/>
</dbReference>
<dbReference type="GO" id="GO:0003735">
    <property type="term" value="F:structural constituent of ribosome"/>
    <property type="evidence" value="ECO:0007669"/>
    <property type="project" value="InterPro"/>
</dbReference>
<dbReference type="GO" id="GO:0000027">
    <property type="term" value="P:ribosomal large subunit assembly"/>
    <property type="evidence" value="ECO:0007669"/>
    <property type="project" value="UniProtKB-UniRule"/>
</dbReference>
<dbReference type="GO" id="GO:0006412">
    <property type="term" value="P:translation"/>
    <property type="evidence" value="ECO:0007669"/>
    <property type="project" value="InterPro"/>
</dbReference>
<dbReference type="CDD" id="cd07026">
    <property type="entry name" value="Ribosomal_L20"/>
    <property type="match status" value="1"/>
</dbReference>
<dbReference type="FunFam" id="1.10.1900.20:FF:000001">
    <property type="entry name" value="50S ribosomal protein L20"/>
    <property type="match status" value="1"/>
</dbReference>
<dbReference type="Gene3D" id="6.10.160.10">
    <property type="match status" value="1"/>
</dbReference>
<dbReference type="Gene3D" id="1.10.1900.20">
    <property type="entry name" value="Ribosomal protein L20"/>
    <property type="match status" value="1"/>
</dbReference>
<dbReference type="HAMAP" id="MF_00382">
    <property type="entry name" value="Ribosomal_bL20"/>
    <property type="match status" value="1"/>
</dbReference>
<dbReference type="InterPro" id="IPR005813">
    <property type="entry name" value="Ribosomal_bL20"/>
</dbReference>
<dbReference type="InterPro" id="IPR049946">
    <property type="entry name" value="RIBOSOMAL_L20_CS"/>
</dbReference>
<dbReference type="InterPro" id="IPR035566">
    <property type="entry name" value="Ribosomal_protein_bL20_C"/>
</dbReference>
<dbReference type="NCBIfam" id="TIGR01032">
    <property type="entry name" value="rplT_bact"/>
    <property type="match status" value="1"/>
</dbReference>
<dbReference type="PANTHER" id="PTHR10986">
    <property type="entry name" value="39S RIBOSOMAL PROTEIN L20"/>
    <property type="match status" value="1"/>
</dbReference>
<dbReference type="Pfam" id="PF00453">
    <property type="entry name" value="Ribosomal_L20"/>
    <property type="match status" value="1"/>
</dbReference>
<dbReference type="PRINTS" id="PR00062">
    <property type="entry name" value="RIBOSOMALL20"/>
</dbReference>
<dbReference type="SUPFAM" id="SSF74731">
    <property type="entry name" value="Ribosomal protein L20"/>
    <property type="match status" value="1"/>
</dbReference>
<dbReference type="PROSITE" id="PS00937">
    <property type="entry name" value="RIBOSOMAL_L20"/>
    <property type="match status" value="1"/>
</dbReference>
<protein>
    <recommendedName>
        <fullName evidence="1">Large ribosomal subunit protein bL20</fullName>
    </recommendedName>
    <alternativeName>
        <fullName evidence="2">50S ribosomal protein L20</fullName>
    </alternativeName>
</protein>
<sequence>MPRVKRGVTARARHKKVLKLAKGYYGARSRTYRVAVQAVTKAGQYAYRDRRQKKRQFRQLWIARINAAARQNGLSYSRFINGLKKASIEIDRKILADIAVFDKVVFATLVEKAKEALN</sequence>
<gene>
    <name evidence="1" type="primary">rplT</name>
    <name type="ordered locus">Sden_1708</name>
</gene>
<keyword id="KW-1185">Reference proteome</keyword>
<keyword id="KW-0687">Ribonucleoprotein</keyword>
<keyword id="KW-0689">Ribosomal protein</keyword>
<keyword id="KW-0694">RNA-binding</keyword>
<keyword id="KW-0699">rRNA-binding</keyword>
<reference key="1">
    <citation type="submission" date="2006-03" db="EMBL/GenBank/DDBJ databases">
        <title>Complete sequence of Shewanella denitrificans OS217.</title>
        <authorList>
            <consortium name="US DOE Joint Genome Institute"/>
            <person name="Copeland A."/>
            <person name="Lucas S."/>
            <person name="Lapidus A."/>
            <person name="Barry K."/>
            <person name="Detter J.C."/>
            <person name="Glavina del Rio T."/>
            <person name="Hammon N."/>
            <person name="Israni S."/>
            <person name="Dalin E."/>
            <person name="Tice H."/>
            <person name="Pitluck S."/>
            <person name="Brettin T."/>
            <person name="Bruce D."/>
            <person name="Han C."/>
            <person name="Tapia R."/>
            <person name="Gilna P."/>
            <person name="Kiss H."/>
            <person name="Schmutz J."/>
            <person name="Larimer F."/>
            <person name="Land M."/>
            <person name="Hauser L."/>
            <person name="Kyrpides N."/>
            <person name="Lykidis A."/>
            <person name="Richardson P."/>
        </authorList>
    </citation>
    <scope>NUCLEOTIDE SEQUENCE [LARGE SCALE GENOMIC DNA]</scope>
    <source>
        <strain>OS217 / ATCC BAA-1090 / DSM 15013</strain>
    </source>
</reference>
<name>RL20_SHEDO</name>
<feature type="chain" id="PRO_1000049066" description="Large ribosomal subunit protein bL20">
    <location>
        <begin position="1"/>
        <end position="118"/>
    </location>
</feature>
<proteinExistence type="inferred from homology"/>
<organism>
    <name type="scientific">Shewanella denitrificans (strain OS217 / ATCC BAA-1090 / DSM 15013)</name>
    <dbReference type="NCBI Taxonomy" id="318161"/>
    <lineage>
        <taxon>Bacteria</taxon>
        <taxon>Pseudomonadati</taxon>
        <taxon>Pseudomonadota</taxon>
        <taxon>Gammaproteobacteria</taxon>
        <taxon>Alteromonadales</taxon>
        <taxon>Shewanellaceae</taxon>
        <taxon>Shewanella</taxon>
    </lineage>
</organism>